<evidence type="ECO:0000269" key="1">
    <source>
    </source>
</evidence>
<evidence type="ECO:0000269" key="2">
    <source>
    </source>
</evidence>
<evidence type="ECO:0000303" key="3">
    <source>
    </source>
</evidence>
<evidence type="ECO:0000305" key="4"/>
<evidence type="ECO:0000305" key="5">
    <source>
    </source>
</evidence>
<evidence type="ECO:0000312" key="6">
    <source>
        <dbReference type="EMBL" id="CCP44036.1"/>
    </source>
</evidence>
<evidence type="ECO:0007744" key="7">
    <source>
        <dbReference type="PDB" id="8J5Q"/>
    </source>
</evidence>
<evidence type="ECO:0007744" key="8">
    <source>
        <dbReference type="PDB" id="8J5R"/>
    </source>
</evidence>
<evidence type="ECO:0007744" key="9">
    <source>
        <dbReference type="PDB" id="8J5S"/>
    </source>
</evidence>
<evidence type="ECO:0007744" key="10">
    <source>
        <dbReference type="PDB" id="8J5T"/>
    </source>
</evidence>
<evidence type="ECO:0007744" key="11">
    <source>
        <dbReference type="PDB" id="8J5U"/>
    </source>
</evidence>
<evidence type="ECO:0007829" key="12">
    <source>
        <dbReference type="PDB" id="8J5Q"/>
    </source>
</evidence>
<evidence type="ECO:0007829" key="13">
    <source>
        <dbReference type="PDB" id="8J5R"/>
    </source>
</evidence>
<evidence type="ECO:0007829" key="14">
    <source>
        <dbReference type="PDB" id="8J5S"/>
    </source>
</evidence>
<evidence type="ECO:0007829" key="15">
    <source>
        <dbReference type="PDB" id="8J5T"/>
    </source>
</evidence>
<evidence type="ECO:0007829" key="16">
    <source>
        <dbReference type="PDB" id="8J5U"/>
    </source>
</evidence>
<keyword id="KW-0002">3D-structure</keyword>
<keyword id="KW-0571">Peptide transport</keyword>
<keyword id="KW-0574">Periplasm</keyword>
<keyword id="KW-0653">Protein transport</keyword>
<keyword id="KW-1185">Reference proteome</keyword>
<keyword id="KW-0813">Transport</keyword>
<comment type="function">
    <text evidence="1 2">Part of the ABC transporter complex OppABCD involved in the uptake of oligopeptides (PubMed:20808924, PubMed:38548954). Peptide-binding protein that shows broad specificity but a moderate preference for hydrophobic oligopeptides and those that are 6-16 amino acids long (PubMed:38548954). Can bind the tripeptide glutathione (GSH) and the nonapeptide bradykinin (PubMed:20808924). Glutathione (GSH) uptake by mycobacteria through the OppABCD system contributes to the depletion of the GSH pool in infected macrophages, which impairs the ability of the macrophage to detoxify methylglyoxal (MG) and contributes to enhanced production of inflammatory cytokines (PubMed:20808924).</text>
</comment>
<comment type="subunit">
    <text evidence="2 5">The complex is composed of an ATP-binding protein (OppD), two transmembrane proteins (OppB and OppC) and a solute-binding protein (OppA).</text>
</comment>
<comment type="subcellular location">
    <subcellularLocation>
        <location evidence="2">Periplasm</location>
    </subcellularLocation>
    <text evidence="2">Attached to the external side of the transmembrane subunits OppB and OppC.</text>
</comment>
<comment type="disruption phenotype">
    <text evidence="1">The uptake of glutathione is compromised in the oppDA knockout mutant.</text>
</comment>
<comment type="similarity">
    <text evidence="4">Belongs to the bacterial solute-binding protein 5 family.</text>
</comment>
<proteinExistence type="evidence at protein level"/>
<gene>
    <name evidence="3" type="primary">oppA</name>
    <name evidence="6" type="ordered locus">Rv1280c</name>
    <name type="ORF">MTCY50.02</name>
</gene>
<protein>
    <recommendedName>
        <fullName evidence="4">Oligopeptide-binding protein OppA</fullName>
    </recommendedName>
</protein>
<dbReference type="EMBL" id="AL123456">
    <property type="protein sequence ID" value="CCP44036.1"/>
    <property type="molecule type" value="Genomic_DNA"/>
</dbReference>
<dbReference type="PIR" id="H70755">
    <property type="entry name" value="H70755"/>
</dbReference>
<dbReference type="RefSeq" id="NP_215796.1">
    <property type="nucleotide sequence ID" value="NC_000962.3"/>
</dbReference>
<dbReference type="RefSeq" id="WP_003900310.1">
    <property type="nucleotide sequence ID" value="NZ_NVQJ01000030.1"/>
</dbReference>
<dbReference type="PDB" id="8J5Q">
    <property type="method" value="EM"/>
    <property type="resolution" value="3.25 A"/>
    <property type="chains" value="A=1-591"/>
</dbReference>
<dbReference type="PDB" id="8J5R">
    <property type="method" value="EM"/>
    <property type="resolution" value="3.28 A"/>
    <property type="chains" value="A=1-591"/>
</dbReference>
<dbReference type="PDB" id="8J5S">
    <property type="method" value="EM"/>
    <property type="resolution" value="3.00 A"/>
    <property type="chains" value="A=1-591"/>
</dbReference>
<dbReference type="PDB" id="8J5T">
    <property type="method" value="EM"/>
    <property type="resolution" value="2.98 A"/>
    <property type="chains" value="A=1-591"/>
</dbReference>
<dbReference type="PDB" id="8J5U">
    <property type="method" value="X-ray"/>
    <property type="resolution" value="1.98 A"/>
    <property type="chains" value="A=1-591"/>
</dbReference>
<dbReference type="PDBsum" id="8J5Q"/>
<dbReference type="PDBsum" id="8J5R"/>
<dbReference type="PDBsum" id="8J5S"/>
<dbReference type="PDBsum" id="8J5T"/>
<dbReference type="PDBsum" id="8J5U"/>
<dbReference type="EMDB" id="EMD-35990"/>
<dbReference type="EMDB" id="EMD-35991"/>
<dbReference type="EMDB" id="EMD-35992"/>
<dbReference type="EMDB" id="EMD-35993"/>
<dbReference type="SMR" id="P9WGU5"/>
<dbReference type="FunCoup" id="P9WGU5">
    <property type="interactions" value="86"/>
</dbReference>
<dbReference type="STRING" id="83332.Rv1280c"/>
<dbReference type="PaxDb" id="83332-Rv1280c"/>
<dbReference type="DNASU" id="886985"/>
<dbReference type="GeneID" id="45425252"/>
<dbReference type="GeneID" id="886985"/>
<dbReference type="KEGG" id="mtu:Rv1280c"/>
<dbReference type="KEGG" id="mtv:RVBD_1280c"/>
<dbReference type="TubercuList" id="Rv1280c"/>
<dbReference type="eggNOG" id="COG0747">
    <property type="taxonomic scope" value="Bacteria"/>
</dbReference>
<dbReference type="InParanoid" id="P9WGU5"/>
<dbReference type="OrthoDB" id="7888869at2"/>
<dbReference type="PhylomeDB" id="P9WGU5"/>
<dbReference type="Reactome" id="R-HSA-1222538">
    <property type="pathway name" value="Tolerance by Mtb to nitric oxide produced by macrophages"/>
</dbReference>
<dbReference type="Proteomes" id="UP000001584">
    <property type="component" value="Chromosome"/>
</dbReference>
<dbReference type="GO" id="GO:0043190">
    <property type="term" value="C:ATP-binding cassette (ABC) transporter complex"/>
    <property type="evidence" value="ECO:0007669"/>
    <property type="project" value="InterPro"/>
</dbReference>
<dbReference type="GO" id="GO:0042597">
    <property type="term" value="C:periplasmic space"/>
    <property type="evidence" value="ECO:0000304"/>
    <property type="project" value="Reactome"/>
</dbReference>
<dbReference type="GO" id="GO:0005886">
    <property type="term" value="C:plasma membrane"/>
    <property type="evidence" value="ECO:0007005"/>
    <property type="project" value="MTBBASE"/>
</dbReference>
<dbReference type="GO" id="GO:0043295">
    <property type="term" value="F:glutathione binding"/>
    <property type="evidence" value="ECO:0000314"/>
    <property type="project" value="MTBBASE"/>
</dbReference>
<dbReference type="GO" id="GO:0042277">
    <property type="term" value="F:peptide binding"/>
    <property type="evidence" value="ECO:0000314"/>
    <property type="project" value="MTBBASE"/>
</dbReference>
<dbReference type="GO" id="GO:1904680">
    <property type="term" value="F:peptide transmembrane transporter activity"/>
    <property type="evidence" value="ECO:0000314"/>
    <property type="project" value="MTBBASE"/>
</dbReference>
<dbReference type="GO" id="GO:0015833">
    <property type="term" value="P:peptide transport"/>
    <property type="evidence" value="ECO:0000318"/>
    <property type="project" value="GO_Central"/>
</dbReference>
<dbReference type="GO" id="GO:0017038">
    <property type="term" value="P:protein import"/>
    <property type="evidence" value="ECO:0000314"/>
    <property type="project" value="MTBBASE"/>
</dbReference>
<dbReference type="CDD" id="cd08501">
    <property type="entry name" value="PBP2_Lpqw"/>
    <property type="match status" value="1"/>
</dbReference>
<dbReference type="FunFam" id="3.10.105.10:FF:000032">
    <property type="entry name" value="Probable periplasmic oligopeptide-binding lipoprotein oppA"/>
    <property type="match status" value="1"/>
</dbReference>
<dbReference type="Gene3D" id="3.90.76.10">
    <property type="entry name" value="Dipeptide-binding Protein, Domain 1"/>
    <property type="match status" value="1"/>
</dbReference>
<dbReference type="Gene3D" id="3.10.105.10">
    <property type="entry name" value="Dipeptide-binding Protein, Domain 3"/>
    <property type="match status" value="1"/>
</dbReference>
<dbReference type="Gene3D" id="3.40.190.10">
    <property type="entry name" value="Periplasmic binding protein-like II"/>
    <property type="match status" value="1"/>
</dbReference>
<dbReference type="InterPro" id="IPR030678">
    <property type="entry name" value="Peptide/Ni-bd"/>
</dbReference>
<dbReference type="InterPro" id="IPR039424">
    <property type="entry name" value="SBP_5"/>
</dbReference>
<dbReference type="InterPro" id="IPR000914">
    <property type="entry name" value="SBP_5_dom"/>
</dbReference>
<dbReference type="PANTHER" id="PTHR30290:SF65">
    <property type="entry name" value="MONOACYL PHOSPHATIDYLINOSITOL TETRAMANNOSIDE-BINDING PROTEIN LPQW-RELATED"/>
    <property type="match status" value="1"/>
</dbReference>
<dbReference type="PANTHER" id="PTHR30290">
    <property type="entry name" value="PERIPLASMIC BINDING COMPONENT OF ABC TRANSPORTER"/>
    <property type="match status" value="1"/>
</dbReference>
<dbReference type="Pfam" id="PF00496">
    <property type="entry name" value="SBP_bac_5"/>
    <property type="match status" value="1"/>
</dbReference>
<dbReference type="PIRSF" id="PIRSF002741">
    <property type="entry name" value="MppA"/>
    <property type="match status" value="1"/>
</dbReference>
<dbReference type="SUPFAM" id="SSF53850">
    <property type="entry name" value="Periplasmic binding protein-like II"/>
    <property type="match status" value="1"/>
</dbReference>
<organism>
    <name type="scientific">Mycobacterium tuberculosis (strain ATCC 25618 / H37Rv)</name>
    <dbReference type="NCBI Taxonomy" id="83332"/>
    <lineage>
        <taxon>Bacteria</taxon>
        <taxon>Bacillati</taxon>
        <taxon>Actinomycetota</taxon>
        <taxon>Actinomycetes</taxon>
        <taxon>Mycobacteriales</taxon>
        <taxon>Mycobacteriaceae</taxon>
        <taxon>Mycobacterium</taxon>
        <taxon>Mycobacterium tuberculosis complex</taxon>
    </lineage>
</organism>
<reference key="1">
    <citation type="journal article" date="1998" name="Nature">
        <title>Deciphering the biology of Mycobacterium tuberculosis from the complete genome sequence.</title>
        <authorList>
            <person name="Cole S.T."/>
            <person name="Brosch R."/>
            <person name="Parkhill J."/>
            <person name="Garnier T."/>
            <person name="Churcher C.M."/>
            <person name="Harris D.E."/>
            <person name="Gordon S.V."/>
            <person name="Eiglmeier K."/>
            <person name="Gas S."/>
            <person name="Barry C.E. III"/>
            <person name="Tekaia F."/>
            <person name="Badcock K."/>
            <person name="Basham D."/>
            <person name="Brown D."/>
            <person name="Chillingworth T."/>
            <person name="Connor R."/>
            <person name="Davies R.M."/>
            <person name="Devlin K."/>
            <person name="Feltwell T."/>
            <person name="Gentles S."/>
            <person name="Hamlin N."/>
            <person name="Holroyd S."/>
            <person name="Hornsby T."/>
            <person name="Jagels K."/>
            <person name="Krogh A."/>
            <person name="McLean J."/>
            <person name="Moule S."/>
            <person name="Murphy L.D."/>
            <person name="Oliver S."/>
            <person name="Osborne J."/>
            <person name="Quail M.A."/>
            <person name="Rajandream M.A."/>
            <person name="Rogers J."/>
            <person name="Rutter S."/>
            <person name="Seeger K."/>
            <person name="Skelton S."/>
            <person name="Squares S."/>
            <person name="Squares R."/>
            <person name="Sulston J.E."/>
            <person name="Taylor K."/>
            <person name="Whitehead S."/>
            <person name="Barrell B.G."/>
        </authorList>
    </citation>
    <scope>NUCLEOTIDE SEQUENCE [LARGE SCALE GENOMIC DNA]</scope>
    <source>
        <strain>ATCC 25618 / H37Rv</strain>
    </source>
</reference>
<reference key="2">
    <citation type="journal article" date="2010" name="PLoS ONE">
        <title>An oligopeptide transporter of Mycobacterium tuberculosis regulates cytokine release and apoptosis of infected macrophages.</title>
        <authorList>
            <person name="Dasgupta A."/>
            <person name="Sureka K."/>
            <person name="Mitra D."/>
            <person name="Saha B."/>
            <person name="Sanyal S."/>
            <person name="Das A.K."/>
            <person name="Chakrabarti P."/>
            <person name="Jackson M."/>
            <person name="Gicquel B."/>
            <person name="Kundu M."/>
            <person name="Basu J."/>
        </authorList>
    </citation>
    <scope>FUNCTION</scope>
    <scope>DISRUPTION PHENOTYPE</scope>
    <scope>MUTAGENESIS OF GLY-109; ASN-110; ASN-230; ASP-494 AND PHE-496</scope>
    <source>
        <strain>H37Rv</strain>
    </source>
</reference>
<reference key="3">
    <citation type="journal article" date="2011" name="Mol. Cell. Proteomics">
        <title>Proteogenomic analysis of Mycobacterium tuberculosis by high resolution mass spectrometry.</title>
        <authorList>
            <person name="Kelkar D.S."/>
            <person name="Kumar D."/>
            <person name="Kumar P."/>
            <person name="Balakrishnan L."/>
            <person name="Muthusamy B."/>
            <person name="Yadav A.K."/>
            <person name="Shrivastava P."/>
            <person name="Marimuthu A."/>
            <person name="Anand S."/>
            <person name="Sundaram H."/>
            <person name="Kingsbury R."/>
            <person name="Harsha H.C."/>
            <person name="Nair B."/>
            <person name="Prasad T.S."/>
            <person name="Chauhan D.S."/>
            <person name="Katoch K."/>
            <person name="Katoch V.M."/>
            <person name="Kumar P."/>
            <person name="Chaerkady R."/>
            <person name="Ramachandran S."/>
            <person name="Dash D."/>
            <person name="Pandey A."/>
        </authorList>
    </citation>
    <scope>IDENTIFICATION BY MASS SPECTROMETRY [LARGE SCALE ANALYSIS]</scope>
    <source>
        <strain>ATCC 25618 / H37Rv</strain>
    </source>
</reference>
<reference evidence="7 8 9 10 11" key="4">
    <citation type="journal article" date="2024" name="Nat. Struct. Mol. Biol.">
        <title>An oligopeptide permease, OppABCD, requires an iron-sulfur cluster domain for functionality.</title>
        <authorList>
            <person name="Yang X."/>
            <person name="Hu T."/>
            <person name="Liang J."/>
            <person name="Xiong Z."/>
            <person name="Lin Z."/>
            <person name="Zhao Y."/>
            <person name="Zhou X."/>
            <person name="Gao Y."/>
            <person name="Sun S."/>
            <person name="Yang X."/>
            <person name="Guddat L.W."/>
            <person name="Yang H."/>
            <person name="Rao Z."/>
            <person name="Zhang B."/>
        </authorList>
    </citation>
    <scope>STRUCTURE BY ELECTRON MICROSCOPY (2.98 ANGSTROMS) IN COMPLEXES WITH OPPB; OPPC; OPPD AND AN ENDOGENOUS OLIGOPEPTIDE</scope>
    <scope>X-RAY CRYSTALLOGRAPHY (1.98 ANGSTROMS)</scope>
    <scope>FUNCTION</scope>
    <scope>SUBUNIT</scope>
    <scope>SUBCELLULAR LOCATION</scope>
    <scope>MUTAGENESIS OF TRP-491</scope>
    <source>
        <strain>H37Rv</strain>
    </source>
</reference>
<accession>P9WGU5</accession>
<accession>L0T665</accession>
<accession>P66771</accession>
<accession>Q11041</accession>
<name>OPPA_MYCTU</name>
<feature type="chain" id="PRO_0000062776" description="Oligopeptide-binding protein OppA">
    <location>
        <begin position="1"/>
        <end position="591"/>
    </location>
</feature>
<feature type="mutagenesis site" description="More than 50% loss of glutathione or bradykinin binding activity." evidence="1">
    <original>G</original>
    <variation>S</variation>
    <location>
        <position position="109"/>
    </location>
</feature>
<feature type="mutagenesis site" description="More than 50% loss of glutathione or bradykinin binding activity." evidence="1">
    <original>N</original>
    <variation>A</variation>
    <location>
        <position position="110"/>
    </location>
</feature>
<feature type="mutagenesis site" description="More than 50% loss of glutathione or bradykinin binding activity." evidence="1">
    <original>N</original>
    <variation>G</variation>
    <location>
        <position position="230"/>
    </location>
</feature>
<feature type="mutagenesis site" description="The ATPase activity of the OppABCD complex is significantly reduced. Cannot bind an endogenous nonapeptide." evidence="2">
    <original>W</original>
    <variation>A</variation>
    <location>
        <position position="491"/>
    </location>
</feature>
<feature type="mutagenesis site" description="More than 50% loss of glutathione or bradykinin binding activity." evidence="1">
    <original>D</original>
    <variation>N</variation>
    <location>
        <position position="494"/>
    </location>
</feature>
<feature type="mutagenesis site" description="More than 50% loss of glutathione or bradykinin binding activity." evidence="1">
    <original>F</original>
    <variation>D</variation>
    <location>
        <position position="496"/>
    </location>
</feature>
<feature type="helix" evidence="16">
    <location>
        <begin position="82"/>
        <end position="84"/>
    </location>
</feature>
<feature type="strand" evidence="13">
    <location>
        <begin position="85"/>
        <end position="87"/>
    </location>
</feature>
<feature type="strand" evidence="16">
    <location>
        <begin position="90"/>
        <end position="97"/>
    </location>
</feature>
<feature type="strand" evidence="13">
    <location>
        <begin position="104"/>
        <end position="106"/>
    </location>
</feature>
<feature type="turn" evidence="15">
    <location>
        <begin position="107"/>
        <end position="109"/>
    </location>
</feature>
<feature type="helix" evidence="16">
    <location>
        <begin position="112"/>
        <end position="118"/>
    </location>
</feature>
<feature type="turn" evidence="16">
    <location>
        <begin position="119"/>
        <end position="121"/>
    </location>
</feature>
<feature type="strand" evidence="16">
    <location>
        <begin position="125"/>
        <end position="128"/>
    </location>
</feature>
<feature type="strand" evidence="16">
    <location>
        <begin position="134"/>
        <end position="136"/>
    </location>
</feature>
<feature type="turn" evidence="16">
    <location>
        <begin position="138"/>
        <end position="140"/>
    </location>
</feature>
<feature type="strand" evidence="16">
    <location>
        <begin position="141"/>
        <end position="148"/>
    </location>
</feature>
<feature type="turn" evidence="16">
    <location>
        <begin position="149"/>
        <end position="152"/>
    </location>
</feature>
<feature type="strand" evidence="16">
    <location>
        <begin position="153"/>
        <end position="158"/>
    </location>
</feature>
<feature type="helix" evidence="16">
    <location>
        <begin position="172"/>
        <end position="182"/>
    </location>
</feature>
<feature type="strand" evidence="16">
    <location>
        <begin position="183"/>
        <end position="186"/>
    </location>
</feature>
<feature type="helix" evidence="16">
    <location>
        <begin position="197"/>
        <end position="199"/>
    </location>
</feature>
<feature type="strand" evidence="16">
    <location>
        <begin position="200"/>
        <end position="205"/>
    </location>
</feature>
<feature type="strand" evidence="16">
    <location>
        <begin position="211"/>
        <end position="218"/>
    </location>
</feature>
<feature type="helix" evidence="16">
    <location>
        <begin position="223"/>
        <end position="225"/>
    </location>
</feature>
<feature type="strand" evidence="14">
    <location>
        <begin position="226"/>
        <end position="228"/>
    </location>
</feature>
<feature type="helix" evidence="16">
    <location>
        <begin position="236"/>
        <end position="239"/>
    </location>
</feature>
<feature type="helix" evidence="16">
    <location>
        <begin position="242"/>
        <end position="247"/>
    </location>
</feature>
<feature type="strand" evidence="16">
    <location>
        <begin position="250"/>
        <end position="252"/>
    </location>
</feature>
<feature type="strand" evidence="16">
    <location>
        <begin position="258"/>
        <end position="266"/>
    </location>
</feature>
<feature type="turn" evidence="16">
    <location>
        <begin position="267"/>
        <end position="270"/>
    </location>
</feature>
<feature type="strand" evidence="16">
    <location>
        <begin position="271"/>
        <end position="276"/>
    </location>
</feature>
<feature type="strand" evidence="16">
    <location>
        <begin position="288"/>
        <end position="294"/>
    </location>
</feature>
<feature type="helix" evidence="16">
    <location>
        <begin position="297"/>
        <end position="299"/>
    </location>
</feature>
<feature type="helix" evidence="16">
    <location>
        <begin position="300"/>
        <end position="305"/>
    </location>
</feature>
<feature type="strand" evidence="16">
    <location>
        <begin position="310"/>
        <end position="313"/>
    </location>
</feature>
<feature type="helix" evidence="16">
    <location>
        <begin position="317"/>
        <end position="325"/>
    </location>
</feature>
<feature type="strand" evidence="16">
    <location>
        <begin position="329"/>
        <end position="333"/>
    </location>
</feature>
<feature type="strand" evidence="16">
    <location>
        <begin position="337"/>
        <end position="344"/>
    </location>
</feature>
<feature type="helix" evidence="16">
    <location>
        <begin position="351"/>
        <end position="353"/>
    </location>
</feature>
<feature type="helix" evidence="16">
    <location>
        <begin position="355"/>
        <end position="362"/>
    </location>
</feature>
<feature type="helix" evidence="16">
    <location>
        <begin position="367"/>
        <end position="375"/>
    </location>
</feature>
<feature type="strand" evidence="16">
    <location>
        <begin position="379"/>
        <end position="381"/>
    </location>
</feature>
<feature type="strand" evidence="12">
    <location>
        <begin position="388"/>
        <end position="390"/>
    </location>
</feature>
<feature type="strand" evidence="15">
    <location>
        <begin position="392"/>
        <end position="394"/>
    </location>
</feature>
<feature type="helix" evidence="16">
    <location>
        <begin position="402"/>
        <end position="404"/>
    </location>
</feature>
<feature type="helix" evidence="16">
    <location>
        <begin position="408"/>
        <end position="417"/>
    </location>
</feature>
<feature type="strand" evidence="16">
    <location>
        <begin position="423"/>
        <end position="426"/>
    </location>
</feature>
<feature type="strand" evidence="13">
    <location>
        <begin position="430"/>
        <end position="433"/>
    </location>
</feature>
<feature type="strand" evidence="16">
    <location>
        <begin position="435"/>
        <end position="441"/>
    </location>
</feature>
<feature type="helix" evidence="16">
    <location>
        <begin position="444"/>
        <end position="458"/>
    </location>
</feature>
<feature type="turn" evidence="16">
    <location>
        <begin position="459"/>
        <end position="461"/>
    </location>
</feature>
<feature type="strand" evidence="16">
    <location>
        <begin position="463"/>
        <end position="469"/>
    </location>
</feature>
<feature type="helix" evidence="16">
    <location>
        <begin position="474"/>
        <end position="477"/>
    </location>
</feature>
<feature type="helix" evidence="16">
    <location>
        <begin position="479"/>
        <end position="481"/>
    </location>
</feature>
<feature type="strand" evidence="16">
    <location>
        <begin position="485"/>
        <end position="492"/>
    </location>
</feature>
<feature type="helix" evidence="16">
    <location>
        <begin position="497"/>
        <end position="499"/>
    </location>
</feature>
<feature type="helix" evidence="16">
    <location>
        <begin position="500"/>
        <end position="504"/>
    </location>
</feature>
<feature type="helix" evidence="16">
    <location>
        <begin position="519"/>
        <end position="530"/>
    </location>
</feature>
<feature type="helix" evidence="16">
    <location>
        <begin position="534"/>
        <end position="550"/>
    </location>
</feature>
<feature type="strand" evidence="16">
    <location>
        <begin position="554"/>
        <end position="559"/>
    </location>
</feature>
<feature type="strand" evidence="16">
    <location>
        <begin position="563"/>
        <end position="567"/>
    </location>
</feature>
<feature type="strand" evidence="16">
    <location>
        <begin position="570"/>
        <end position="572"/>
    </location>
</feature>
<feature type="turn" evidence="16">
    <location>
        <begin position="583"/>
        <end position="585"/>
    </location>
</feature>
<feature type="strand" evidence="15">
    <location>
        <begin position="587"/>
        <end position="589"/>
    </location>
</feature>
<sequence length="591" mass="63477">MADRGQRRGCAPGIASALRASFQGKSRPWTQTRYWAFALLTPLVVAMVLTGCSASGTQLELAPTADRRAAVGTTSDINQQDPATLQDGGNLRLSLTDFPPNFNILHIDGNNAEVAAMMKATLPRAFIIGPDGSTTVDTNYFTSIELTRTAPQVVTYTINPEAVWSDGTPITWRDIASQIHAISGADKAFEIASSSGAERVASVTRGVDDRQAVVTFAKPYAEWRGMFAGNGMLLPASMTATPEAFNKGQLDGPGPSAGPFVVSALDRTAQRIVLTRNPRWWGARPRLDSITYLVLDDAARLPALQNNTIDATGVGTLDQLTIAARTKGISIRRAPGPSWYHFTLNGAPGSILADKALRLAIAKGIDRYTIARVAQYGLTSDPVPLNNHVFVAGQDGYQDNSGVVAYNPEQAKRELDALGWRRSGAFREKDGRQLVIRDLFYDAQSTRQFAQIAQHTLAQIGVKLELQAKSGSGFFSDYVNVGAFDIAQFGWVGDAFPLSSLTQIYASDGESNFGKIGSPQIDAAIERTLAELDPGKARALANQVDELIWAEGFSLPLTQSPGTVAVRSTLANFGATGLADLDYTAIGFMRR</sequence>